<organism>
    <name type="scientific">Caldanaerobacter subterraneus subsp. tengcongensis (strain DSM 15242 / JCM 11007 / NBRC 100824 / MB4)</name>
    <name type="common">Thermoanaerobacter tengcongensis</name>
    <dbReference type="NCBI Taxonomy" id="273068"/>
    <lineage>
        <taxon>Bacteria</taxon>
        <taxon>Bacillati</taxon>
        <taxon>Bacillota</taxon>
        <taxon>Clostridia</taxon>
        <taxon>Thermoanaerobacterales</taxon>
        <taxon>Thermoanaerobacteraceae</taxon>
        <taxon>Caldanaerobacter</taxon>
    </lineage>
</organism>
<comment type="function">
    <text evidence="1">Probably deamidates glutamine residues to glutamate on methyl-accepting chemotaxis receptors (MCPs), playing an important role in chemotaxis.</text>
</comment>
<comment type="catalytic activity">
    <reaction evidence="1">
        <text>L-glutaminyl-[protein] + H2O = L-glutamyl-[protein] + NH4(+)</text>
        <dbReference type="Rhea" id="RHEA:16441"/>
        <dbReference type="Rhea" id="RHEA-COMP:10207"/>
        <dbReference type="Rhea" id="RHEA-COMP:10208"/>
        <dbReference type="ChEBI" id="CHEBI:15377"/>
        <dbReference type="ChEBI" id="CHEBI:28938"/>
        <dbReference type="ChEBI" id="CHEBI:29973"/>
        <dbReference type="ChEBI" id="CHEBI:30011"/>
        <dbReference type="EC" id="3.5.1.44"/>
    </reaction>
</comment>
<comment type="similarity">
    <text evidence="1">Belongs to the CheD family.</text>
</comment>
<protein>
    <recommendedName>
        <fullName evidence="1">Probable chemoreceptor glutamine deamidase CheD</fullName>
        <ecNumber evidence="1">3.5.1.44</ecNumber>
    </recommendedName>
</protein>
<proteinExistence type="inferred from homology"/>
<evidence type="ECO:0000255" key="1">
    <source>
        <dbReference type="HAMAP-Rule" id="MF_01440"/>
    </source>
</evidence>
<accession>Q8RA16</accession>
<gene>
    <name evidence="1" type="primary">cheD</name>
    <name type="ordered locus">TTE1414</name>
</gene>
<name>CHED_CALS4</name>
<sequence>MESKILRVGMADAKVTKSPGILTTIGLGSCVGIVLYDPIAKVAGLVHIMLPYSNKISDNSNKLKFADTGIEILIEEMLKEGANPKRLISKLAGGAQMFSSKINSDIMNIGERNVIATKEVLKKLGIPIVAEDTGGNYGRTIEFYSEDGRLLVKTIGHGVKYI</sequence>
<feature type="chain" id="PRO_0000251071" description="Probable chemoreceptor glutamine deamidase CheD">
    <location>
        <begin position="1"/>
        <end position="162"/>
    </location>
</feature>
<keyword id="KW-0145">Chemotaxis</keyword>
<keyword id="KW-0378">Hydrolase</keyword>
<keyword id="KW-1185">Reference proteome</keyword>
<dbReference type="EC" id="3.5.1.44" evidence="1"/>
<dbReference type="EMBL" id="AE008691">
    <property type="protein sequence ID" value="AAM24636.1"/>
    <property type="molecule type" value="Genomic_DNA"/>
</dbReference>
<dbReference type="RefSeq" id="WP_011025690.1">
    <property type="nucleotide sequence ID" value="NC_003869.1"/>
</dbReference>
<dbReference type="SMR" id="Q8RA16"/>
<dbReference type="STRING" id="273068.TTE1414"/>
<dbReference type="KEGG" id="tte:TTE1414"/>
<dbReference type="eggNOG" id="COG1871">
    <property type="taxonomic scope" value="Bacteria"/>
</dbReference>
<dbReference type="HOGENOM" id="CLU_087854_2_0_9"/>
<dbReference type="OrthoDB" id="9807202at2"/>
<dbReference type="Proteomes" id="UP000000555">
    <property type="component" value="Chromosome"/>
</dbReference>
<dbReference type="GO" id="GO:0050568">
    <property type="term" value="F:protein-glutamine glutaminase activity"/>
    <property type="evidence" value="ECO:0007669"/>
    <property type="project" value="UniProtKB-UniRule"/>
</dbReference>
<dbReference type="GO" id="GO:0006935">
    <property type="term" value="P:chemotaxis"/>
    <property type="evidence" value="ECO:0007669"/>
    <property type="project" value="UniProtKB-UniRule"/>
</dbReference>
<dbReference type="CDD" id="cd16352">
    <property type="entry name" value="CheD"/>
    <property type="match status" value="1"/>
</dbReference>
<dbReference type="Gene3D" id="3.30.1330.200">
    <property type="match status" value="1"/>
</dbReference>
<dbReference type="HAMAP" id="MF_01440">
    <property type="entry name" value="CheD"/>
    <property type="match status" value="1"/>
</dbReference>
<dbReference type="InterPro" id="IPR038592">
    <property type="entry name" value="CheD-like_sf"/>
</dbReference>
<dbReference type="InterPro" id="IPR005659">
    <property type="entry name" value="Chemorcpt_Glu_NH3ase_CheD"/>
</dbReference>
<dbReference type="InterPro" id="IPR011324">
    <property type="entry name" value="Cytotoxic_necrot_fac-like_cat"/>
</dbReference>
<dbReference type="PANTHER" id="PTHR35147">
    <property type="entry name" value="CHEMORECEPTOR GLUTAMINE DEAMIDASE CHED-RELATED"/>
    <property type="match status" value="1"/>
</dbReference>
<dbReference type="PANTHER" id="PTHR35147:SF1">
    <property type="entry name" value="CHEMORECEPTOR GLUTAMINE DEAMIDASE CHED-RELATED"/>
    <property type="match status" value="1"/>
</dbReference>
<dbReference type="Pfam" id="PF03975">
    <property type="entry name" value="CheD"/>
    <property type="match status" value="1"/>
</dbReference>
<dbReference type="SUPFAM" id="SSF64438">
    <property type="entry name" value="CNF1/YfiH-like putative cysteine hydrolases"/>
    <property type="match status" value="1"/>
</dbReference>
<reference key="1">
    <citation type="journal article" date="2002" name="Genome Res.">
        <title>A complete sequence of the T. tengcongensis genome.</title>
        <authorList>
            <person name="Bao Q."/>
            <person name="Tian Y."/>
            <person name="Li W."/>
            <person name="Xu Z."/>
            <person name="Xuan Z."/>
            <person name="Hu S."/>
            <person name="Dong W."/>
            <person name="Yang J."/>
            <person name="Chen Y."/>
            <person name="Xue Y."/>
            <person name="Xu Y."/>
            <person name="Lai X."/>
            <person name="Huang L."/>
            <person name="Dong X."/>
            <person name="Ma Y."/>
            <person name="Ling L."/>
            <person name="Tan H."/>
            <person name="Chen R."/>
            <person name="Wang J."/>
            <person name="Yu J."/>
            <person name="Yang H."/>
        </authorList>
    </citation>
    <scope>NUCLEOTIDE SEQUENCE [LARGE SCALE GENOMIC DNA]</scope>
    <source>
        <strain>DSM 15242 / JCM 11007 / NBRC 100824 / MB4</strain>
    </source>
</reference>